<comment type="function">
    <text evidence="1">Modulates RecA activity.</text>
</comment>
<comment type="subcellular location">
    <subcellularLocation>
        <location evidence="1">Cytoplasm</location>
    </subcellularLocation>
</comment>
<comment type="similarity">
    <text evidence="1">Belongs to the RecX family.</text>
</comment>
<name>RECX_ESCF3</name>
<organism>
    <name type="scientific">Escherichia fergusonii (strain ATCC 35469 / DSM 13698 / CCUG 18766 / IAM 14443 / JCM 21226 / LMG 7866 / NBRC 102419 / NCTC 12128 / CDC 0568-73)</name>
    <dbReference type="NCBI Taxonomy" id="585054"/>
    <lineage>
        <taxon>Bacteria</taxon>
        <taxon>Pseudomonadati</taxon>
        <taxon>Pseudomonadota</taxon>
        <taxon>Gammaproteobacteria</taxon>
        <taxon>Enterobacterales</taxon>
        <taxon>Enterobacteriaceae</taxon>
        <taxon>Escherichia</taxon>
    </lineage>
</organism>
<feature type="chain" id="PRO_1000137168" description="Regulatory protein RecX">
    <location>
        <begin position="1"/>
        <end position="166"/>
    </location>
</feature>
<accession>B7LW31</accession>
<gene>
    <name evidence="1" type="primary">recX</name>
    <name type="ordered locus">EFER_0376</name>
</gene>
<evidence type="ECO:0000255" key="1">
    <source>
        <dbReference type="HAMAP-Rule" id="MF_01114"/>
    </source>
</evidence>
<proteinExistence type="inferred from homology"/>
<keyword id="KW-0963">Cytoplasm</keyword>
<protein>
    <recommendedName>
        <fullName evidence="1">Regulatory protein RecX</fullName>
    </recommendedName>
</protein>
<dbReference type="EMBL" id="CU928158">
    <property type="protein sequence ID" value="CAQ87937.1"/>
    <property type="molecule type" value="Genomic_DNA"/>
</dbReference>
<dbReference type="RefSeq" id="WP_000140516.1">
    <property type="nucleotide sequence ID" value="NC_011740.1"/>
</dbReference>
<dbReference type="SMR" id="B7LW31"/>
<dbReference type="GeneID" id="75058554"/>
<dbReference type="KEGG" id="efe:EFER_0376"/>
<dbReference type="HOGENOM" id="CLU_066607_3_2_6"/>
<dbReference type="OrthoDB" id="7066780at2"/>
<dbReference type="Proteomes" id="UP000000745">
    <property type="component" value="Chromosome"/>
</dbReference>
<dbReference type="GO" id="GO:0005737">
    <property type="term" value="C:cytoplasm"/>
    <property type="evidence" value="ECO:0007669"/>
    <property type="project" value="UniProtKB-SubCell"/>
</dbReference>
<dbReference type="GO" id="GO:0006282">
    <property type="term" value="P:regulation of DNA repair"/>
    <property type="evidence" value="ECO:0007669"/>
    <property type="project" value="UniProtKB-UniRule"/>
</dbReference>
<dbReference type="FunFam" id="1.10.10.10:FF:000133">
    <property type="entry name" value="Regulatory protein RecX"/>
    <property type="match status" value="1"/>
</dbReference>
<dbReference type="FunFam" id="1.10.10.10:FF:000134">
    <property type="entry name" value="Regulatory protein RecX"/>
    <property type="match status" value="1"/>
</dbReference>
<dbReference type="FunFam" id="1.10.10.10:FF:000209">
    <property type="entry name" value="Regulatory protein RecX"/>
    <property type="match status" value="1"/>
</dbReference>
<dbReference type="Gene3D" id="1.10.10.10">
    <property type="entry name" value="Winged helix-like DNA-binding domain superfamily/Winged helix DNA-binding domain"/>
    <property type="match status" value="3"/>
</dbReference>
<dbReference type="HAMAP" id="MF_01114">
    <property type="entry name" value="RecX"/>
    <property type="match status" value="1"/>
</dbReference>
<dbReference type="InterPro" id="IPR053926">
    <property type="entry name" value="RecX_HTH_1st"/>
</dbReference>
<dbReference type="InterPro" id="IPR053924">
    <property type="entry name" value="RecX_HTH_2nd"/>
</dbReference>
<dbReference type="InterPro" id="IPR053925">
    <property type="entry name" value="RecX_HTH_3rd"/>
</dbReference>
<dbReference type="InterPro" id="IPR003783">
    <property type="entry name" value="Regulatory_RecX"/>
</dbReference>
<dbReference type="InterPro" id="IPR036388">
    <property type="entry name" value="WH-like_DNA-bd_sf"/>
</dbReference>
<dbReference type="NCBIfam" id="NF001052">
    <property type="entry name" value="PRK00117.1-1"/>
    <property type="match status" value="1"/>
</dbReference>
<dbReference type="PANTHER" id="PTHR33602">
    <property type="entry name" value="REGULATORY PROTEIN RECX FAMILY PROTEIN"/>
    <property type="match status" value="1"/>
</dbReference>
<dbReference type="PANTHER" id="PTHR33602:SF1">
    <property type="entry name" value="REGULATORY PROTEIN RECX FAMILY PROTEIN"/>
    <property type="match status" value="1"/>
</dbReference>
<dbReference type="Pfam" id="PF21982">
    <property type="entry name" value="RecX_HTH1"/>
    <property type="match status" value="1"/>
</dbReference>
<dbReference type="Pfam" id="PF02631">
    <property type="entry name" value="RecX_HTH2"/>
    <property type="match status" value="1"/>
</dbReference>
<dbReference type="Pfam" id="PF21981">
    <property type="entry name" value="RecX_HTH3"/>
    <property type="match status" value="1"/>
</dbReference>
<sequence length="166" mass="19438">MTESTSRRPAYARLLDRAVRILAVRDHSEQELRRKLAAPIMGKNGPEEIDATVEDYERVIAWCHEHGYLDDSRFVARFIASRSRKGYGPARIRQELNQKGISREATEKAMRECDIDWCALARDQATRKYGEPLPTVFSEKVKIQRFLLYRGYLMEDIQDIWRNFAD</sequence>
<reference key="1">
    <citation type="journal article" date="2009" name="PLoS Genet.">
        <title>Organised genome dynamics in the Escherichia coli species results in highly diverse adaptive paths.</title>
        <authorList>
            <person name="Touchon M."/>
            <person name="Hoede C."/>
            <person name="Tenaillon O."/>
            <person name="Barbe V."/>
            <person name="Baeriswyl S."/>
            <person name="Bidet P."/>
            <person name="Bingen E."/>
            <person name="Bonacorsi S."/>
            <person name="Bouchier C."/>
            <person name="Bouvet O."/>
            <person name="Calteau A."/>
            <person name="Chiapello H."/>
            <person name="Clermont O."/>
            <person name="Cruveiller S."/>
            <person name="Danchin A."/>
            <person name="Diard M."/>
            <person name="Dossat C."/>
            <person name="Karoui M.E."/>
            <person name="Frapy E."/>
            <person name="Garry L."/>
            <person name="Ghigo J.M."/>
            <person name="Gilles A.M."/>
            <person name="Johnson J."/>
            <person name="Le Bouguenec C."/>
            <person name="Lescat M."/>
            <person name="Mangenot S."/>
            <person name="Martinez-Jehanne V."/>
            <person name="Matic I."/>
            <person name="Nassif X."/>
            <person name="Oztas S."/>
            <person name="Petit M.A."/>
            <person name="Pichon C."/>
            <person name="Rouy Z."/>
            <person name="Ruf C.S."/>
            <person name="Schneider D."/>
            <person name="Tourret J."/>
            <person name="Vacherie B."/>
            <person name="Vallenet D."/>
            <person name="Medigue C."/>
            <person name="Rocha E.P.C."/>
            <person name="Denamur E."/>
        </authorList>
    </citation>
    <scope>NUCLEOTIDE SEQUENCE [LARGE SCALE GENOMIC DNA]</scope>
    <source>
        <strain>ATCC 35469 / DSM 13698 / BCRC 15582 / CCUG 18766 / IAM 14443 / JCM 21226 / LMG 7866 / NBRC 102419 / NCTC 12128 / CDC 0568-73</strain>
    </source>
</reference>